<accession>B3QL20</accession>
<sequence>MNETLSGVVTRVTGATYIVETGDGPKVRCRTVPSTVSENEGSNLVAVGDRVEFRPKASETEMAEGVIVRVEERRSVLERRREVRRNRSKEKEQVIAANIDQIVLITSFDDPPFNSRLVDRYLVFAESEHLPLLIVVNKIDLDEEGMVEEDLEVYRNLDCNICLVSAEDGRGIEELRELLRDRLSAFSGHSGVGKSTLINLLVGREELRTAETSGKTGKGVHTTTSSAMFQLPGGGYVIDTPGIREFNLAGITRENLRFYYTEFLRFMPECAFSSCSHTVEPGCAVIAAVESGRIDAERYESYLALLDSLDE</sequence>
<keyword id="KW-0963">Cytoplasm</keyword>
<keyword id="KW-0342">GTP-binding</keyword>
<keyword id="KW-0378">Hydrolase</keyword>
<keyword id="KW-0479">Metal-binding</keyword>
<keyword id="KW-0547">Nucleotide-binding</keyword>
<keyword id="KW-0690">Ribosome biogenesis</keyword>
<keyword id="KW-0694">RNA-binding</keyword>
<keyword id="KW-0699">rRNA-binding</keyword>
<keyword id="KW-0862">Zinc</keyword>
<evidence type="ECO:0000255" key="1">
    <source>
        <dbReference type="HAMAP-Rule" id="MF_01820"/>
    </source>
</evidence>
<evidence type="ECO:0000255" key="2">
    <source>
        <dbReference type="PROSITE-ProRule" id="PRU01058"/>
    </source>
</evidence>
<organism>
    <name type="scientific">Chlorobaculum parvum (strain DSM 263 / NCIMB 8327)</name>
    <name type="common">Chlorobium vibrioforme subsp. thiosulfatophilum</name>
    <dbReference type="NCBI Taxonomy" id="517417"/>
    <lineage>
        <taxon>Bacteria</taxon>
        <taxon>Pseudomonadati</taxon>
        <taxon>Chlorobiota</taxon>
        <taxon>Chlorobiia</taxon>
        <taxon>Chlorobiales</taxon>
        <taxon>Chlorobiaceae</taxon>
        <taxon>Chlorobaculum</taxon>
    </lineage>
</organism>
<name>RSGA_CHLP8</name>
<feature type="chain" id="PRO_1000188042" description="Small ribosomal subunit biogenesis GTPase RsgA">
    <location>
        <begin position="1"/>
        <end position="311"/>
    </location>
</feature>
<feature type="domain" description="CP-type G" evidence="2">
    <location>
        <begin position="88"/>
        <end position="246"/>
    </location>
</feature>
<feature type="binding site" evidence="1">
    <location>
        <begin position="137"/>
        <end position="140"/>
    </location>
    <ligand>
        <name>GTP</name>
        <dbReference type="ChEBI" id="CHEBI:37565"/>
    </ligand>
</feature>
<feature type="binding site" evidence="1">
    <location>
        <begin position="188"/>
        <end position="196"/>
    </location>
    <ligand>
        <name>GTP</name>
        <dbReference type="ChEBI" id="CHEBI:37565"/>
    </ligand>
</feature>
<feature type="binding site" evidence="1">
    <location>
        <position position="270"/>
    </location>
    <ligand>
        <name>Zn(2+)</name>
        <dbReference type="ChEBI" id="CHEBI:29105"/>
    </ligand>
</feature>
<feature type="binding site" evidence="1">
    <location>
        <position position="275"/>
    </location>
    <ligand>
        <name>Zn(2+)</name>
        <dbReference type="ChEBI" id="CHEBI:29105"/>
    </ligand>
</feature>
<feature type="binding site" evidence="1">
    <location>
        <position position="277"/>
    </location>
    <ligand>
        <name>Zn(2+)</name>
        <dbReference type="ChEBI" id="CHEBI:29105"/>
    </ligand>
</feature>
<feature type="binding site" evidence="1">
    <location>
        <position position="283"/>
    </location>
    <ligand>
        <name>Zn(2+)</name>
        <dbReference type="ChEBI" id="CHEBI:29105"/>
    </ligand>
</feature>
<reference key="1">
    <citation type="submission" date="2008-06" db="EMBL/GenBank/DDBJ databases">
        <title>Complete sequence of Chlorobaculum parvum NCIB 8327.</title>
        <authorList>
            <consortium name="US DOE Joint Genome Institute"/>
            <person name="Lucas S."/>
            <person name="Copeland A."/>
            <person name="Lapidus A."/>
            <person name="Glavina del Rio T."/>
            <person name="Dalin E."/>
            <person name="Tice H."/>
            <person name="Bruce D."/>
            <person name="Goodwin L."/>
            <person name="Pitluck S."/>
            <person name="Schmutz J."/>
            <person name="Larimer F."/>
            <person name="Land M."/>
            <person name="Hauser L."/>
            <person name="Kyrpides N."/>
            <person name="Mikhailova N."/>
            <person name="Zhao F."/>
            <person name="Li T."/>
            <person name="Liu Z."/>
            <person name="Overmann J."/>
            <person name="Bryant D.A."/>
            <person name="Richardson P."/>
        </authorList>
    </citation>
    <scope>NUCLEOTIDE SEQUENCE [LARGE SCALE GENOMIC DNA]</scope>
    <source>
        <strain>DSM 263 / NCIMB 8327</strain>
    </source>
</reference>
<protein>
    <recommendedName>
        <fullName evidence="1">Small ribosomal subunit biogenesis GTPase RsgA</fullName>
        <ecNumber evidence="1">3.6.1.-</ecNumber>
    </recommendedName>
</protein>
<proteinExistence type="inferred from homology"/>
<comment type="function">
    <text evidence="1">One of several proteins that assist in the late maturation steps of the functional core of the 30S ribosomal subunit. Helps release RbfA from mature subunits. May play a role in the assembly of ribosomal proteins into the subunit. Circularly permuted GTPase that catalyzes slow GTP hydrolysis, GTPase activity is stimulated by the 30S ribosomal subunit.</text>
</comment>
<comment type="cofactor">
    <cofactor evidence="1">
        <name>Zn(2+)</name>
        <dbReference type="ChEBI" id="CHEBI:29105"/>
    </cofactor>
    <text evidence="1">Binds 1 zinc ion per subunit.</text>
</comment>
<comment type="subunit">
    <text evidence="1">Monomer. Associates with 30S ribosomal subunit, binds 16S rRNA.</text>
</comment>
<comment type="subcellular location">
    <subcellularLocation>
        <location evidence="1">Cytoplasm</location>
    </subcellularLocation>
</comment>
<comment type="similarity">
    <text evidence="1">Belongs to the TRAFAC class YlqF/YawG GTPase family. RsgA subfamily.</text>
</comment>
<gene>
    <name evidence="1" type="primary">rsgA</name>
    <name type="ordered locus">Cpar_0385</name>
</gene>
<dbReference type="EC" id="3.6.1.-" evidence="1"/>
<dbReference type="EMBL" id="CP001099">
    <property type="protein sequence ID" value="ACF10808.1"/>
    <property type="molecule type" value="Genomic_DNA"/>
</dbReference>
<dbReference type="RefSeq" id="WP_012501641.1">
    <property type="nucleotide sequence ID" value="NC_011027.1"/>
</dbReference>
<dbReference type="SMR" id="B3QL20"/>
<dbReference type="STRING" id="517417.Cpar_0385"/>
<dbReference type="KEGG" id="cpc:Cpar_0385"/>
<dbReference type="eggNOG" id="COG1162">
    <property type="taxonomic scope" value="Bacteria"/>
</dbReference>
<dbReference type="HOGENOM" id="CLU_033617_2_0_10"/>
<dbReference type="OrthoDB" id="9809485at2"/>
<dbReference type="Proteomes" id="UP000008811">
    <property type="component" value="Chromosome"/>
</dbReference>
<dbReference type="GO" id="GO:0005737">
    <property type="term" value="C:cytoplasm"/>
    <property type="evidence" value="ECO:0007669"/>
    <property type="project" value="UniProtKB-SubCell"/>
</dbReference>
<dbReference type="GO" id="GO:0005525">
    <property type="term" value="F:GTP binding"/>
    <property type="evidence" value="ECO:0007669"/>
    <property type="project" value="UniProtKB-UniRule"/>
</dbReference>
<dbReference type="GO" id="GO:0003924">
    <property type="term" value="F:GTPase activity"/>
    <property type="evidence" value="ECO:0007669"/>
    <property type="project" value="UniProtKB-UniRule"/>
</dbReference>
<dbReference type="GO" id="GO:0046872">
    <property type="term" value="F:metal ion binding"/>
    <property type="evidence" value="ECO:0007669"/>
    <property type="project" value="UniProtKB-KW"/>
</dbReference>
<dbReference type="GO" id="GO:0019843">
    <property type="term" value="F:rRNA binding"/>
    <property type="evidence" value="ECO:0007669"/>
    <property type="project" value="UniProtKB-KW"/>
</dbReference>
<dbReference type="GO" id="GO:0042274">
    <property type="term" value="P:ribosomal small subunit biogenesis"/>
    <property type="evidence" value="ECO:0007669"/>
    <property type="project" value="UniProtKB-UniRule"/>
</dbReference>
<dbReference type="CDD" id="cd01854">
    <property type="entry name" value="YjeQ_EngC"/>
    <property type="match status" value="1"/>
</dbReference>
<dbReference type="Gene3D" id="2.40.50.140">
    <property type="entry name" value="Nucleic acid-binding proteins"/>
    <property type="match status" value="1"/>
</dbReference>
<dbReference type="Gene3D" id="3.40.50.300">
    <property type="entry name" value="P-loop containing nucleotide triphosphate hydrolases"/>
    <property type="match status" value="1"/>
</dbReference>
<dbReference type="Gene3D" id="1.10.40.50">
    <property type="entry name" value="Probable gtpase engc, domain 3"/>
    <property type="match status" value="1"/>
</dbReference>
<dbReference type="HAMAP" id="MF_01820">
    <property type="entry name" value="GTPase_RsgA"/>
    <property type="match status" value="1"/>
</dbReference>
<dbReference type="InterPro" id="IPR030378">
    <property type="entry name" value="G_CP_dom"/>
</dbReference>
<dbReference type="InterPro" id="IPR012340">
    <property type="entry name" value="NA-bd_OB-fold"/>
</dbReference>
<dbReference type="InterPro" id="IPR027417">
    <property type="entry name" value="P-loop_NTPase"/>
</dbReference>
<dbReference type="InterPro" id="IPR004881">
    <property type="entry name" value="Ribosome_biogen_GTPase_RsgA"/>
</dbReference>
<dbReference type="InterPro" id="IPR010914">
    <property type="entry name" value="RsgA_GTPase_dom"/>
</dbReference>
<dbReference type="NCBIfam" id="TIGR00157">
    <property type="entry name" value="ribosome small subunit-dependent GTPase A"/>
    <property type="match status" value="1"/>
</dbReference>
<dbReference type="PANTHER" id="PTHR32120">
    <property type="entry name" value="SMALL RIBOSOMAL SUBUNIT BIOGENESIS GTPASE RSGA"/>
    <property type="match status" value="1"/>
</dbReference>
<dbReference type="PANTHER" id="PTHR32120:SF11">
    <property type="entry name" value="SMALL RIBOSOMAL SUBUNIT BIOGENESIS GTPASE RSGA 1, MITOCHONDRIAL-RELATED"/>
    <property type="match status" value="1"/>
</dbReference>
<dbReference type="Pfam" id="PF03193">
    <property type="entry name" value="RsgA_GTPase"/>
    <property type="match status" value="1"/>
</dbReference>
<dbReference type="SUPFAM" id="SSF52540">
    <property type="entry name" value="P-loop containing nucleoside triphosphate hydrolases"/>
    <property type="match status" value="1"/>
</dbReference>
<dbReference type="PROSITE" id="PS50936">
    <property type="entry name" value="ENGC_GTPASE"/>
    <property type="match status" value="1"/>
</dbReference>
<dbReference type="PROSITE" id="PS51721">
    <property type="entry name" value="G_CP"/>
    <property type="match status" value="1"/>
</dbReference>